<feature type="chain" id="PRO_1000007155" description="Large ribosomal subunit protein bL28">
    <location>
        <begin position="1"/>
        <end position="62"/>
    </location>
</feature>
<gene>
    <name evidence="1" type="primary">rpmB</name>
    <name type="ordered locus">Acel_1582</name>
</gene>
<comment type="similarity">
    <text evidence="1">Belongs to the bacterial ribosomal protein bL28 family.</text>
</comment>
<protein>
    <recommendedName>
        <fullName evidence="1">Large ribosomal subunit protein bL28</fullName>
    </recommendedName>
    <alternativeName>
        <fullName evidence="2">50S ribosomal protein L28</fullName>
    </alternativeName>
</protein>
<keyword id="KW-1185">Reference proteome</keyword>
<keyword id="KW-0687">Ribonucleoprotein</keyword>
<keyword id="KW-0689">Ribosomal protein</keyword>
<dbReference type="EMBL" id="CP000481">
    <property type="protein sequence ID" value="ABK53354.1"/>
    <property type="molecule type" value="Genomic_DNA"/>
</dbReference>
<dbReference type="RefSeq" id="WP_011720417.1">
    <property type="nucleotide sequence ID" value="NC_008578.1"/>
</dbReference>
<dbReference type="SMR" id="A0LV94"/>
<dbReference type="FunCoup" id="A0LV94">
    <property type="interactions" value="54"/>
</dbReference>
<dbReference type="STRING" id="351607.Acel_1582"/>
<dbReference type="KEGG" id="ace:Acel_1582"/>
<dbReference type="eggNOG" id="COG0227">
    <property type="taxonomic scope" value="Bacteria"/>
</dbReference>
<dbReference type="HOGENOM" id="CLU_064548_7_0_11"/>
<dbReference type="InParanoid" id="A0LV94"/>
<dbReference type="OrthoDB" id="9805609at2"/>
<dbReference type="Proteomes" id="UP000008221">
    <property type="component" value="Chromosome"/>
</dbReference>
<dbReference type="GO" id="GO:1990904">
    <property type="term" value="C:ribonucleoprotein complex"/>
    <property type="evidence" value="ECO:0007669"/>
    <property type="project" value="UniProtKB-KW"/>
</dbReference>
<dbReference type="GO" id="GO:0005840">
    <property type="term" value="C:ribosome"/>
    <property type="evidence" value="ECO:0007669"/>
    <property type="project" value="UniProtKB-KW"/>
</dbReference>
<dbReference type="GO" id="GO:0003735">
    <property type="term" value="F:structural constituent of ribosome"/>
    <property type="evidence" value="ECO:0007669"/>
    <property type="project" value="InterPro"/>
</dbReference>
<dbReference type="GO" id="GO:0006412">
    <property type="term" value="P:translation"/>
    <property type="evidence" value="ECO:0007669"/>
    <property type="project" value="UniProtKB-UniRule"/>
</dbReference>
<dbReference type="FunFam" id="2.30.170.40:FF:000002">
    <property type="entry name" value="50S ribosomal protein L28"/>
    <property type="match status" value="1"/>
</dbReference>
<dbReference type="Gene3D" id="2.30.170.40">
    <property type="entry name" value="Ribosomal protein L28/L24"/>
    <property type="match status" value="1"/>
</dbReference>
<dbReference type="HAMAP" id="MF_00373">
    <property type="entry name" value="Ribosomal_bL28"/>
    <property type="match status" value="1"/>
</dbReference>
<dbReference type="InterPro" id="IPR050096">
    <property type="entry name" value="Bacterial_rp_bL28"/>
</dbReference>
<dbReference type="InterPro" id="IPR026569">
    <property type="entry name" value="Ribosomal_bL28"/>
</dbReference>
<dbReference type="InterPro" id="IPR034704">
    <property type="entry name" value="Ribosomal_bL28/bL31-like_sf"/>
</dbReference>
<dbReference type="InterPro" id="IPR001383">
    <property type="entry name" value="Ribosomal_bL28_bact-type"/>
</dbReference>
<dbReference type="InterPro" id="IPR037147">
    <property type="entry name" value="Ribosomal_bL28_sf"/>
</dbReference>
<dbReference type="NCBIfam" id="TIGR00009">
    <property type="entry name" value="L28"/>
    <property type="match status" value="1"/>
</dbReference>
<dbReference type="PANTHER" id="PTHR39080">
    <property type="entry name" value="50S RIBOSOMAL PROTEIN L28"/>
    <property type="match status" value="1"/>
</dbReference>
<dbReference type="PANTHER" id="PTHR39080:SF1">
    <property type="entry name" value="LARGE RIBOSOMAL SUBUNIT PROTEIN BL28A"/>
    <property type="match status" value="1"/>
</dbReference>
<dbReference type="Pfam" id="PF00830">
    <property type="entry name" value="Ribosomal_L28"/>
    <property type="match status" value="1"/>
</dbReference>
<dbReference type="SUPFAM" id="SSF143800">
    <property type="entry name" value="L28p-like"/>
    <property type="match status" value="1"/>
</dbReference>
<sequence length="62" mass="6894">MAAVCDICGKGPGFGMAVSHSHRRTHRRWNPNIQRVRALIGRGTYKRINVCTSCLKAGKVTR</sequence>
<organism>
    <name type="scientific">Acidothermus cellulolyticus (strain ATCC 43068 / DSM 8971 / 11B)</name>
    <dbReference type="NCBI Taxonomy" id="351607"/>
    <lineage>
        <taxon>Bacteria</taxon>
        <taxon>Bacillati</taxon>
        <taxon>Actinomycetota</taxon>
        <taxon>Actinomycetes</taxon>
        <taxon>Acidothermales</taxon>
        <taxon>Acidothermaceae</taxon>
        <taxon>Acidothermus</taxon>
    </lineage>
</organism>
<reference key="1">
    <citation type="journal article" date="2009" name="Genome Res.">
        <title>Complete genome of the cellulolytic thermophile Acidothermus cellulolyticus 11B provides insights into its ecophysiological and evolutionary adaptations.</title>
        <authorList>
            <person name="Barabote R.D."/>
            <person name="Xie G."/>
            <person name="Leu D.H."/>
            <person name="Normand P."/>
            <person name="Necsulea A."/>
            <person name="Daubin V."/>
            <person name="Medigue C."/>
            <person name="Adney W.S."/>
            <person name="Xu X.C."/>
            <person name="Lapidus A."/>
            <person name="Parales R.E."/>
            <person name="Detter C."/>
            <person name="Pujic P."/>
            <person name="Bruce D."/>
            <person name="Lavire C."/>
            <person name="Challacombe J.F."/>
            <person name="Brettin T.S."/>
            <person name="Berry A.M."/>
        </authorList>
    </citation>
    <scope>NUCLEOTIDE SEQUENCE [LARGE SCALE GENOMIC DNA]</scope>
    <source>
        <strain>ATCC 43068 / DSM 8971 / 11B</strain>
    </source>
</reference>
<name>RL28_ACIC1</name>
<accession>A0LV94</accession>
<proteinExistence type="inferred from homology"/>
<evidence type="ECO:0000255" key="1">
    <source>
        <dbReference type="HAMAP-Rule" id="MF_00373"/>
    </source>
</evidence>
<evidence type="ECO:0000305" key="2"/>